<accession>Q4URB9</accession>
<feature type="signal peptide" evidence="1">
    <location>
        <begin position="1"/>
        <end position="20"/>
    </location>
</feature>
<feature type="chain" id="PRO_1000021691" description="Outer-membrane lipoprotein LolB">
    <location>
        <begin position="21"/>
        <end position="218"/>
    </location>
</feature>
<feature type="lipid moiety-binding region" description="N-palmitoyl cysteine" evidence="1">
    <location>
        <position position="21"/>
    </location>
</feature>
<feature type="lipid moiety-binding region" description="S-diacylglycerol cysteine" evidence="1">
    <location>
        <position position="21"/>
    </location>
</feature>
<protein>
    <recommendedName>
        <fullName evidence="1">Outer-membrane lipoprotein LolB</fullName>
    </recommendedName>
</protein>
<name>LOLB_XANC8</name>
<proteinExistence type="inferred from homology"/>
<reference key="1">
    <citation type="journal article" date="2005" name="Genome Res.">
        <title>Comparative and functional genomic analyses of the pathogenicity of phytopathogen Xanthomonas campestris pv. campestris.</title>
        <authorList>
            <person name="Qian W."/>
            <person name="Jia Y."/>
            <person name="Ren S.-X."/>
            <person name="He Y.-Q."/>
            <person name="Feng J.-X."/>
            <person name="Lu L.-F."/>
            <person name="Sun Q."/>
            <person name="Ying G."/>
            <person name="Tang D.-J."/>
            <person name="Tang H."/>
            <person name="Wu W."/>
            <person name="Hao P."/>
            <person name="Wang L."/>
            <person name="Jiang B.-L."/>
            <person name="Zeng S."/>
            <person name="Gu W.-Y."/>
            <person name="Lu G."/>
            <person name="Rong L."/>
            <person name="Tian Y."/>
            <person name="Yao Z."/>
            <person name="Fu G."/>
            <person name="Chen B."/>
            <person name="Fang R."/>
            <person name="Qiang B."/>
            <person name="Chen Z."/>
            <person name="Zhao G.-P."/>
            <person name="Tang J.-L."/>
            <person name="He C."/>
        </authorList>
    </citation>
    <scope>NUCLEOTIDE SEQUENCE [LARGE SCALE GENOMIC DNA]</scope>
    <source>
        <strain>8004</strain>
    </source>
</reference>
<gene>
    <name evidence="1" type="primary">lolB</name>
    <name type="ordered locus">XC_3360</name>
</gene>
<keyword id="KW-0998">Cell outer membrane</keyword>
<keyword id="KW-0143">Chaperone</keyword>
<keyword id="KW-0449">Lipoprotein</keyword>
<keyword id="KW-0472">Membrane</keyword>
<keyword id="KW-0564">Palmitate</keyword>
<keyword id="KW-0653">Protein transport</keyword>
<keyword id="KW-0732">Signal</keyword>
<keyword id="KW-0813">Transport</keyword>
<comment type="function">
    <text evidence="1">Plays a critical role in the incorporation of lipoproteins in the outer membrane after they are released by the LolA protein.</text>
</comment>
<comment type="subunit">
    <text evidence="1">Monomer.</text>
</comment>
<comment type="subcellular location">
    <subcellularLocation>
        <location evidence="1">Cell outer membrane</location>
        <topology evidence="1">Lipid-anchor</topology>
    </subcellularLocation>
</comment>
<comment type="similarity">
    <text evidence="1">Belongs to the LolB family.</text>
</comment>
<dbReference type="EMBL" id="CP000050">
    <property type="protein sequence ID" value="AAY50404.1"/>
    <property type="molecule type" value="Genomic_DNA"/>
</dbReference>
<dbReference type="RefSeq" id="WP_011036106.1">
    <property type="nucleotide sequence ID" value="NZ_CP155948.1"/>
</dbReference>
<dbReference type="SMR" id="Q4URB9"/>
<dbReference type="KEGG" id="xcb:XC_3360"/>
<dbReference type="HOGENOM" id="CLU_092816_2_2_6"/>
<dbReference type="Proteomes" id="UP000000420">
    <property type="component" value="Chromosome"/>
</dbReference>
<dbReference type="GO" id="GO:0009279">
    <property type="term" value="C:cell outer membrane"/>
    <property type="evidence" value="ECO:0007669"/>
    <property type="project" value="UniProtKB-SubCell"/>
</dbReference>
<dbReference type="GO" id="GO:0044874">
    <property type="term" value="P:lipoprotein localization to outer membrane"/>
    <property type="evidence" value="ECO:0007669"/>
    <property type="project" value="UniProtKB-UniRule"/>
</dbReference>
<dbReference type="GO" id="GO:0015031">
    <property type="term" value="P:protein transport"/>
    <property type="evidence" value="ECO:0007669"/>
    <property type="project" value="UniProtKB-KW"/>
</dbReference>
<dbReference type="CDD" id="cd16326">
    <property type="entry name" value="LolB"/>
    <property type="match status" value="1"/>
</dbReference>
<dbReference type="Gene3D" id="2.50.20.10">
    <property type="entry name" value="Lipoprotein localisation LolA/LolB/LppX"/>
    <property type="match status" value="1"/>
</dbReference>
<dbReference type="HAMAP" id="MF_00233">
    <property type="entry name" value="LolB"/>
    <property type="match status" value="1"/>
</dbReference>
<dbReference type="InterPro" id="IPR029046">
    <property type="entry name" value="LolA/LolB/LppX"/>
</dbReference>
<dbReference type="InterPro" id="IPR004565">
    <property type="entry name" value="OM_lipoprot_LolB"/>
</dbReference>
<dbReference type="NCBIfam" id="TIGR00548">
    <property type="entry name" value="lolB"/>
    <property type="match status" value="1"/>
</dbReference>
<dbReference type="Pfam" id="PF03550">
    <property type="entry name" value="LolB"/>
    <property type="match status" value="1"/>
</dbReference>
<dbReference type="SUPFAM" id="SSF89392">
    <property type="entry name" value="Prokaryotic lipoproteins and lipoprotein localization factors"/>
    <property type="match status" value="1"/>
</dbReference>
<dbReference type="PROSITE" id="PS51257">
    <property type="entry name" value="PROKAR_LIPOPROTEIN"/>
    <property type="match status" value="1"/>
</dbReference>
<sequence>MSQVIRTLALTGLALAGLSGCVSVPRGQGGAAPAVVGQVSESAQQAETARQAWLQAHPAWSFQGRVAISKGRDGGSGRLDWQQDGPRYHVQLSAPVTRQSWVLTGDTTTGAGRLEGLDGGPRAGADAEQVLLEATGWTIPVNQMPDWVRALRIADAGAARVDLDEHGRPRTVQQDGWTIDFLEWTPASAAQPELPRRIEARNGDAKVRLLVDQWTLSP</sequence>
<organism>
    <name type="scientific">Xanthomonas campestris pv. campestris (strain 8004)</name>
    <dbReference type="NCBI Taxonomy" id="314565"/>
    <lineage>
        <taxon>Bacteria</taxon>
        <taxon>Pseudomonadati</taxon>
        <taxon>Pseudomonadota</taxon>
        <taxon>Gammaproteobacteria</taxon>
        <taxon>Lysobacterales</taxon>
        <taxon>Lysobacteraceae</taxon>
        <taxon>Xanthomonas</taxon>
    </lineage>
</organism>
<evidence type="ECO:0000255" key="1">
    <source>
        <dbReference type="HAMAP-Rule" id="MF_00233"/>
    </source>
</evidence>